<protein>
    <recommendedName>
        <fullName evidence="3">Small ribosomal subunit protein uS15m</fullName>
    </recommendedName>
    <alternativeName>
        <fullName>28S ribosomal protein S15, mitochondrial</fullName>
        <shortName>MRP-S15</shortName>
        <shortName>S15mt</shortName>
    </alternativeName>
</protein>
<proteinExistence type="inferred from homology"/>
<accession>Q9NAP9</accession>
<comment type="subunit">
    <text evidence="1">Component of the mitochondrial ribosome small subunit (28S) which comprises a 12S rRNA and about 30 distinct proteins.</text>
</comment>
<comment type="subcellular location">
    <subcellularLocation>
        <location evidence="1">Mitochondrion</location>
    </subcellularLocation>
</comment>
<comment type="similarity">
    <text evidence="2">Belongs to the universal ribosomal protein uS15 family.</text>
</comment>
<keyword id="KW-0496">Mitochondrion</keyword>
<keyword id="KW-1185">Reference proteome</keyword>
<keyword id="KW-0687">Ribonucleoprotein</keyword>
<keyword id="KW-0689">Ribosomal protein</keyword>
<keyword id="KW-0809">Transit peptide</keyword>
<name>RT15_CAEEL</name>
<gene>
    <name type="primary">mrps-15</name>
    <name type="ORF">K07A12.7</name>
</gene>
<organism>
    <name type="scientific">Caenorhabditis elegans</name>
    <dbReference type="NCBI Taxonomy" id="6239"/>
    <lineage>
        <taxon>Eukaryota</taxon>
        <taxon>Metazoa</taxon>
        <taxon>Ecdysozoa</taxon>
        <taxon>Nematoda</taxon>
        <taxon>Chromadorea</taxon>
        <taxon>Rhabditida</taxon>
        <taxon>Rhabditina</taxon>
        <taxon>Rhabditomorpha</taxon>
        <taxon>Rhabditoidea</taxon>
        <taxon>Rhabditidae</taxon>
        <taxon>Peloderinae</taxon>
        <taxon>Caenorhabditis</taxon>
    </lineage>
</organism>
<sequence>MINLRRFVHTSCRLERGRTAFYNVHQKVTDPAKQDPDYFEKKARELPLDQNYIDALTKLYYEKIGSERDLGLKAADNLILEKTEFGLPRIEKSKTRAKYEDLDVLSNAPESVKKIFSVEMATRKELSQEWKQSLIKSVRQHSLDENSLEMKIAWLTALIRHWSLLVNDIGQETKKKPTWLTHRIWLVINERRKALRILRERNETAFEKTIAALKISYHVPKQPAHVKTRKAWAEAQLKLRVENEKEKRLEELHEKYDKEVEEHKRETQEKRKALNNELDKLAQEMRQIDVIEGKSFETVGKYEPALISSLTETVIHSNLFYHPPPTMTEK</sequence>
<dbReference type="EMBL" id="Z81098">
    <property type="protein sequence ID" value="CAB97235.1"/>
    <property type="molecule type" value="Genomic_DNA"/>
</dbReference>
<dbReference type="RefSeq" id="NP_492351.1">
    <property type="nucleotide sequence ID" value="NM_059950.6"/>
</dbReference>
<dbReference type="SMR" id="Q9NAP9"/>
<dbReference type="BioGRID" id="51793">
    <property type="interactions" value="5"/>
</dbReference>
<dbReference type="FunCoup" id="Q9NAP9">
    <property type="interactions" value="1208"/>
</dbReference>
<dbReference type="IntAct" id="Q9NAP9">
    <property type="interactions" value="1"/>
</dbReference>
<dbReference type="MINT" id="Q9NAP9"/>
<dbReference type="STRING" id="6239.K07A12.7.1"/>
<dbReference type="PaxDb" id="6239-K07A12.7"/>
<dbReference type="PeptideAtlas" id="Q9NAP9"/>
<dbReference type="EnsemblMetazoa" id="K07A12.7.1">
    <property type="protein sequence ID" value="K07A12.7.1"/>
    <property type="gene ID" value="WBGene00010624"/>
</dbReference>
<dbReference type="EnsemblMetazoa" id="K07A12.7.2">
    <property type="protein sequence ID" value="K07A12.7.2"/>
    <property type="gene ID" value="WBGene00010624"/>
</dbReference>
<dbReference type="GeneID" id="187087"/>
<dbReference type="KEGG" id="cel:CELE_K07A12.7"/>
<dbReference type="UCSC" id="K07A12.7">
    <property type="organism name" value="c. elegans"/>
</dbReference>
<dbReference type="AGR" id="WB:WBGene00010624"/>
<dbReference type="CTD" id="187087"/>
<dbReference type="WormBase" id="K07A12.7">
    <property type="protein sequence ID" value="CE25935"/>
    <property type="gene ID" value="WBGene00010624"/>
    <property type="gene designation" value="mrps-15"/>
</dbReference>
<dbReference type="eggNOG" id="KOG2815">
    <property type="taxonomic scope" value="Eukaryota"/>
</dbReference>
<dbReference type="GeneTree" id="ENSGT00390000001737"/>
<dbReference type="HOGENOM" id="CLU_897802_0_0_1"/>
<dbReference type="InParanoid" id="Q9NAP9"/>
<dbReference type="OMA" id="LTHRIWL"/>
<dbReference type="OrthoDB" id="441444at2759"/>
<dbReference type="Reactome" id="R-CEL-5389840">
    <property type="pathway name" value="Mitochondrial translation elongation"/>
</dbReference>
<dbReference type="Reactome" id="R-CEL-5419276">
    <property type="pathway name" value="Mitochondrial translation termination"/>
</dbReference>
<dbReference type="PRO" id="PR:Q9NAP9"/>
<dbReference type="Proteomes" id="UP000001940">
    <property type="component" value="Chromosome I"/>
</dbReference>
<dbReference type="Bgee" id="WBGene00010624">
    <property type="expression patterns" value="Expressed in germ line (C elegans) and 4 other cell types or tissues"/>
</dbReference>
<dbReference type="GO" id="GO:0005763">
    <property type="term" value="C:mitochondrial small ribosomal subunit"/>
    <property type="evidence" value="ECO:0000250"/>
    <property type="project" value="UniProtKB"/>
</dbReference>
<dbReference type="GO" id="GO:0003735">
    <property type="term" value="F:structural constituent of ribosome"/>
    <property type="evidence" value="ECO:0000250"/>
    <property type="project" value="UniProtKB"/>
</dbReference>
<dbReference type="GO" id="GO:0032543">
    <property type="term" value="P:mitochondrial translation"/>
    <property type="evidence" value="ECO:0000250"/>
    <property type="project" value="UniProtKB"/>
</dbReference>
<dbReference type="Gene3D" id="1.10.287.10">
    <property type="entry name" value="S15/NS1, RNA-binding"/>
    <property type="match status" value="1"/>
</dbReference>
<dbReference type="InterPro" id="IPR009068">
    <property type="entry name" value="uS15_NS1_RNA-bd_sf"/>
</dbReference>
<dbReference type="InterPro" id="IPR052137">
    <property type="entry name" value="uS15_ribosomal"/>
</dbReference>
<dbReference type="PANTHER" id="PTHR46685">
    <property type="entry name" value="28S RIBOSOMAL PROTEIN S15, MITOCHONDRIAL"/>
    <property type="match status" value="1"/>
</dbReference>
<dbReference type="PANTHER" id="PTHR46685:SF1">
    <property type="entry name" value="SMALL RIBOSOMAL SUBUNIT PROTEIN US15M"/>
    <property type="match status" value="1"/>
</dbReference>
<dbReference type="SUPFAM" id="SSF47060">
    <property type="entry name" value="S15/NS1 RNA-binding domain"/>
    <property type="match status" value="1"/>
</dbReference>
<evidence type="ECO:0000250" key="1">
    <source>
        <dbReference type="UniProtKB" id="P82913"/>
    </source>
</evidence>
<evidence type="ECO:0000255" key="2"/>
<evidence type="ECO:0000305" key="3"/>
<evidence type="ECO:0000312" key="4">
    <source>
        <dbReference type="EMBL" id="CAB97235.1"/>
    </source>
</evidence>
<reference evidence="4" key="1">
    <citation type="journal article" date="1998" name="Science">
        <title>Genome sequence of the nematode C. elegans: a platform for investigating biology.</title>
        <authorList>
            <consortium name="The C. elegans sequencing consortium"/>
        </authorList>
    </citation>
    <scope>NUCLEOTIDE SEQUENCE [LARGE SCALE GENOMIC DNA]</scope>
    <source>
        <strain evidence="4">Bristol N2</strain>
    </source>
</reference>
<feature type="transit peptide" description="Mitochondrion" evidence="3">
    <location>
        <begin position="1"/>
        <end status="unknown"/>
    </location>
</feature>
<feature type="chain" id="PRO_0000030616" description="Small ribosomal subunit protein uS15m">
    <location>
        <begin status="unknown"/>
        <end position="330"/>
    </location>
</feature>